<feature type="chain" id="PRO_1000096041" description="Bifunctional purine biosynthesis protein PurH">
    <location>
        <begin position="1"/>
        <end position="545"/>
    </location>
</feature>
<feature type="domain" description="MGS-like" evidence="2">
    <location>
        <begin position="1"/>
        <end position="150"/>
    </location>
</feature>
<organism>
    <name type="scientific">Bifidobacterium longum (strain DJO10A)</name>
    <dbReference type="NCBI Taxonomy" id="205913"/>
    <lineage>
        <taxon>Bacteria</taxon>
        <taxon>Bacillati</taxon>
        <taxon>Actinomycetota</taxon>
        <taxon>Actinomycetes</taxon>
        <taxon>Bifidobacteriales</taxon>
        <taxon>Bifidobacteriaceae</taxon>
        <taxon>Bifidobacterium</taxon>
    </lineage>
</organism>
<gene>
    <name evidence="1" type="primary">purH</name>
    <name type="ordered locus">BLD_0459</name>
</gene>
<name>PUR9_BIFLD</name>
<proteinExistence type="inferred from homology"/>
<reference key="1">
    <citation type="journal article" date="2008" name="BMC Genomics">
        <title>Comparative genomic analysis of the gut bacterium Bifidobacterium longum reveals loci susceptible to deletion during pure culture growth.</title>
        <authorList>
            <person name="Lee J.H."/>
            <person name="Karamychev V.N."/>
            <person name="Kozyavkin S.A."/>
            <person name="Mills D."/>
            <person name="Pavlov A.R."/>
            <person name="Pavlova N.V."/>
            <person name="Polouchine N.N."/>
            <person name="Richardson P.M."/>
            <person name="Shakhova V.V."/>
            <person name="Slesarev A.I."/>
            <person name="Weimer B."/>
            <person name="O'Sullivan D.J."/>
        </authorList>
    </citation>
    <scope>NUCLEOTIDE SEQUENCE [LARGE SCALE GENOMIC DNA]</scope>
    <source>
        <strain>DJO10A</strain>
    </source>
</reference>
<dbReference type="EC" id="2.1.2.3" evidence="1"/>
<dbReference type="EC" id="3.5.4.10" evidence="1"/>
<dbReference type="EMBL" id="CP000605">
    <property type="protein sequence ID" value="ACD97905.1"/>
    <property type="molecule type" value="Genomic_DNA"/>
</dbReference>
<dbReference type="RefSeq" id="WP_012471860.1">
    <property type="nucleotide sequence ID" value="NZ_AABM02000001.1"/>
</dbReference>
<dbReference type="SMR" id="B3DRY6"/>
<dbReference type="KEGG" id="blj:BLD_0459"/>
<dbReference type="HOGENOM" id="CLU_016316_5_2_11"/>
<dbReference type="UniPathway" id="UPA00074">
    <property type="reaction ID" value="UER00133"/>
</dbReference>
<dbReference type="UniPathway" id="UPA00074">
    <property type="reaction ID" value="UER00135"/>
</dbReference>
<dbReference type="Proteomes" id="UP000002419">
    <property type="component" value="Chromosome"/>
</dbReference>
<dbReference type="GO" id="GO:0005829">
    <property type="term" value="C:cytosol"/>
    <property type="evidence" value="ECO:0007669"/>
    <property type="project" value="TreeGrafter"/>
</dbReference>
<dbReference type="GO" id="GO:0003937">
    <property type="term" value="F:IMP cyclohydrolase activity"/>
    <property type="evidence" value="ECO:0007669"/>
    <property type="project" value="UniProtKB-UniRule"/>
</dbReference>
<dbReference type="GO" id="GO:0004643">
    <property type="term" value="F:phosphoribosylaminoimidazolecarboxamide formyltransferase activity"/>
    <property type="evidence" value="ECO:0007669"/>
    <property type="project" value="UniProtKB-UniRule"/>
</dbReference>
<dbReference type="GO" id="GO:0006189">
    <property type="term" value="P:'de novo' IMP biosynthetic process"/>
    <property type="evidence" value="ECO:0007669"/>
    <property type="project" value="UniProtKB-UniRule"/>
</dbReference>
<dbReference type="CDD" id="cd01421">
    <property type="entry name" value="IMPCH"/>
    <property type="match status" value="1"/>
</dbReference>
<dbReference type="FunFam" id="3.40.140.20:FF:000001">
    <property type="entry name" value="Bifunctional purine biosynthesis protein PurH"/>
    <property type="match status" value="1"/>
</dbReference>
<dbReference type="FunFam" id="3.40.50.1380:FF:000001">
    <property type="entry name" value="Bifunctional purine biosynthesis protein PurH"/>
    <property type="match status" value="1"/>
</dbReference>
<dbReference type="Gene3D" id="3.40.140.20">
    <property type="match status" value="2"/>
</dbReference>
<dbReference type="Gene3D" id="3.40.50.1380">
    <property type="entry name" value="Methylglyoxal synthase-like domain"/>
    <property type="match status" value="1"/>
</dbReference>
<dbReference type="HAMAP" id="MF_00139">
    <property type="entry name" value="PurH"/>
    <property type="match status" value="1"/>
</dbReference>
<dbReference type="InterPro" id="IPR024051">
    <property type="entry name" value="AICAR_Tfase_dup_dom_sf"/>
</dbReference>
<dbReference type="InterPro" id="IPR016193">
    <property type="entry name" value="Cytidine_deaminase-like"/>
</dbReference>
<dbReference type="InterPro" id="IPR011607">
    <property type="entry name" value="MGS-like_dom"/>
</dbReference>
<dbReference type="InterPro" id="IPR036914">
    <property type="entry name" value="MGS-like_dom_sf"/>
</dbReference>
<dbReference type="InterPro" id="IPR002695">
    <property type="entry name" value="PurH-like"/>
</dbReference>
<dbReference type="NCBIfam" id="NF002049">
    <property type="entry name" value="PRK00881.1"/>
    <property type="match status" value="1"/>
</dbReference>
<dbReference type="NCBIfam" id="TIGR00355">
    <property type="entry name" value="purH"/>
    <property type="match status" value="1"/>
</dbReference>
<dbReference type="PANTHER" id="PTHR11692:SF0">
    <property type="entry name" value="BIFUNCTIONAL PURINE BIOSYNTHESIS PROTEIN ATIC"/>
    <property type="match status" value="1"/>
</dbReference>
<dbReference type="PANTHER" id="PTHR11692">
    <property type="entry name" value="BIFUNCTIONAL PURINE BIOSYNTHESIS PROTEIN PURH"/>
    <property type="match status" value="1"/>
</dbReference>
<dbReference type="Pfam" id="PF01808">
    <property type="entry name" value="AICARFT_IMPCHas"/>
    <property type="match status" value="1"/>
</dbReference>
<dbReference type="Pfam" id="PF02142">
    <property type="entry name" value="MGS"/>
    <property type="match status" value="1"/>
</dbReference>
<dbReference type="PIRSF" id="PIRSF000414">
    <property type="entry name" value="AICARFT_IMPCHas"/>
    <property type="match status" value="1"/>
</dbReference>
<dbReference type="SMART" id="SM00798">
    <property type="entry name" value="AICARFT_IMPCHas"/>
    <property type="match status" value="1"/>
</dbReference>
<dbReference type="SMART" id="SM00851">
    <property type="entry name" value="MGS"/>
    <property type="match status" value="1"/>
</dbReference>
<dbReference type="SUPFAM" id="SSF53927">
    <property type="entry name" value="Cytidine deaminase-like"/>
    <property type="match status" value="1"/>
</dbReference>
<dbReference type="SUPFAM" id="SSF52335">
    <property type="entry name" value="Methylglyoxal synthase-like"/>
    <property type="match status" value="1"/>
</dbReference>
<dbReference type="PROSITE" id="PS51855">
    <property type="entry name" value="MGS"/>
    <property type="match status" value="1"/>
</dbReference>
<comment type="catalytic activity">
    <reaction evidence="1">
        <text>(6R)-10-formyltetrahydrofolate + 5-amino-1-(5-phospho-beta-D-ribosyl)imidazole-4-carboxamide = 5-formamido-1-(5-phospho-D-ribosyl)imidazole-4-carboxamide + (6S)-5,6,7,8-tetrahydrofolate</text>
        <dbReference type="Rhea" id="RHEA:22192"/>
        <dbReference type="ChEBI" id="CHEBI:57453"/>
        <dbReference type="ChEBI" id="CHEBI:58467"/>
        <dbReference type="ChEBI" id="CHEBI:58475"/>
        <dbReference type="ChEBI" id="CHEBI:195366"/>
        <dbReference type="EC" id="2.1.2.3"/>
    </reaction>
</comment>
<comment type="catalytic activity">
    <reaction evidence="1">
        <text>IMP + H2O = 5-formamido-1-(5-phospho-D-ribosyl)imidazole-4-carboxamide</text>
        <dbReference type="Rhea" id="RHEA:18445"/>
        <dbReference type="ChEBI" id="CHEBI:15377"/>
        <dbReference type="ChEBI" id="CHEBI:58053"/>
        <dbReference type="ChEBI" id="CHEBI:58467"/>
        <dbReference type="EC" id="3.5.4.10"/>
    </reaction>
</comment>
<comment type="pathway">
    <text evidence="1">Purine metabolism; IMP biosynthesis via de novo pathway; 5-formamido-1-(5-phospho-D-ribosyl)imidazole-4-carboxamide from 5-amino-1-(5-phospho-D-ribosyl)imidazole-4-carboxamide (10-formyl THF route): step 1/1.</text>
</comment>
<comment type="pathway">
    <text evidence="1">Purine metabolism; IMP biosynthesis via de novo pathway; IMP from 5-formamido-1-(5-phospho-D-ribosyl)imidazole-4-carboxamide: step 1/1.</text>
</comment>
<comment type="domain">
    <text evidence="1">The IMP cyclohydrolase activity resides in the N-terminal region.</text>
</comment>
<comment type="similarity">
    <text evidence="1">Belongs to the PurH family.</text>
</comment>
<keyword id="KW-0378">Hydrolase</keyword>
<keyword id="KW-0511">Multifunctional enzyme</keyword>
<keyword id="KW-0658">Purine biosynthesis</keyword>
<keyword id="KW-0808">Transferase</keyword>
<protein>
    <recommendedName>
        <fullName evidence="1">Bifunctional purine biosynthesis protein PurH</fullName>
    </recommendedName>
    <domain>
        <recommendedName>
            <fullName evidence="1">Phosphoribosylaminoimidazolecarboxamide formyltransferase</fullName>
            <ecNumber evidence="1">2.1.2.3</ecNumber>
        </recommendedName>
        <alternativeName>
            <fullName evidence="1">AICAR transformylase</fullName>
        </alternativeName>
    </domain>
    <domain>
        <recommendedName>
            <fullName evidence="1">IMP cyclohydrolase</fullName>
            <ecNumber evidence="1">3.5.4.10</ecNumber>
        </recommendedName>
        <alternativeName>
            <fullName evidence="1">ATIC</fullName>
        </alternativeName>
        <alternativeName>
            <fullName evidence="1">IMP synthase</fullName>
        </alternativeName>
        <alternativeName>
            <fullName evidence="1">Inosinicase</fullName>
        </alternativeName>
    </domain>
</protein>
<sequence>MTNTNRPIRRALVSVFHKEGIEVLAEAFVKAGTEVVSTGSTAKKLAELGVKVTEVSDVTGFPECLDGRVKTLHPYIHAGILADMTNPEHAKQLEEFGIKPFDLVVVNLYPFADTVRSGANEADTIEKIDIGGPSMVRGAAKNHATVAIVTDPADYALVASRVADGTGFSLDERKWLAAKAFAHTAAYDATINEWTAKHWPKPASLDAVEVDKDDQGTEVDSAKFPAQFTRTWDRAHTLRYGENSHQQAALYIDPLNQTGFAHAEQLGGKPMSYNNYVDADAAWRTVWDMAPAIAVAVVKHNNPCGLAIGATAAEAHKKAHACDPMSAYGGVIACNSKVTLEMAESVRPIFTEVIVAPDYEPAALELLQTKKKNLRILKVAEPPKGHEAIRQIDGGLLVQDTDLINAVGDDPDAWKLVAGEAADADTLKDLVFAWRAIRCVKSNAILLAHDQATVGIGMGQVNRVDSCHLAVERANTLADGADRATGAVAASDAFFPFADGAQVLIDAGVKAIVQPGGSIRDEEVIEAAKKAGVTMYLTGTRHFFH</sequence>
<evidence type="ECO:0000255" key="1">
    <source>
        <dbReference type="HAMAP-Rule" id="MF_00139"/>
    </source>
</evidence>
<evidence type="ECO:0000255" key="2">
    <source>
        <dbReference type="PROSITE-ProRule" id="PRU01202"/>
    </source>
</evidence>
<accession>B3DRY6</accession>